<organism>
    <name type="scientific">Oryza sativa subsp. japonica</name>
    <name type="common">Rice</name>
    <dbReference type="NCBI Taxonomy" id="39947"/>
    <lineage>
        <taxon>Eukaryota</taxon>
        <taxon>Viridiplantae</taxon>
        <taxon>Streptophyta</taxon>
        <taxon>Embryophyta</taxon>
        <taxon>Tracheophyta</taxon>
        <taxon>Spermatophyta</taxon>
        <taxon>Magnoliopsida</taxon>
        <taxon>Liliopsida</taxon>
        <taxon>Poales</taxon>
        <taxon>Poaceae</taxon>
        <taxon>BOP clade</taxon>
        <taxon>Oryzoideae</taxon>
        <taxon>Oryzeae</taxon>
        <taxon>Oryzinae</taxon>
        <taxon>Oryza</taxon>
        <taxon>Oryza sativa</taxon>
    </lineage>
</organism>
<proteinExistence type="evidence at transcript level"/>
<comment type="function">
    <text evidence="1">Transcriptional regulator that specifically binds DNA of heat shock promoter elements (HSE).</text>
</comment>
<comment type="subunit">
    <text evidence="1">Homotrimer.</text>
</comment>
<comment type="subcellular location">
    <subcellularLocation>
        <location evidence="4">Nucleus</location>
    </subcellularLocation>
</comment>
<comment type="domain">
    <text>The hydrophobic-rich region (HR-A/B) corresponds to the oligomerization domain.</text>
</comment>
<comment type="PTM">
    <text evidence="1">Exhibits temperature-dependent phosphorylation.</text>
</comment>
<comment type="similarity">
    <text evidence="4">Belongs to the HSF family. Class C subfamily.</text>
</comment>
<comment type="sequence caution" evidence="4">
    <conflict type="erroneous initiation">
        <sequence resource="EMBL-CDS" id="EAZ28980"/>
    </conflict>
</comment>
<name>HFC1B_ORYSJ</name>
<protein>
    <recommendedName>
        <fullName>Heat stress transcription factor C-1b</fullName>
    </recommendedName>
    <alternativeName>
        <fullName>Heat stress transcription factor 11</fullName>
        <shortName>rHsf11</shortName>
    </alternativeName>
    <alternativeName>
        <fullName>Heat stress transcription factor 3</fullName>
        <shortName>OsHsf-03</shortName>
    </alternativeName>
</protein>
<accession>Q942D6</accession>
<accession>A3ANU1</accession>
<accession>B7EC10</accession>
<keyword id="KW-0175">Coiled coil</keyword>
<keyword id="KW-0238">DNA-binding</keyword>
<keyword id="KW-0539">Nucleus</keyword>
<keyword id="KW-0597">Phosphoprotein</keyword>
<keyword id="KW-1185">Reference proteome</keyword>
<keyword id="KW-0346">Stress response</keyword>
<keyword id="KW-0804">Transcription</keyword>
<keyword id="KW-0805">Transcription regulation</keyword>
<sequence>MMGGECKVHQLQAAGDGGPGAVAPFVAKTFHMVSDPSTNAVVRWGGAGNTFLVLDPAAFSDFLLPSYFKHRNFASFVRQLNTYGFRKVDPDRWEFAHESFLRGQAQLLPRIVRKKKKGGAAPGCRELCEEGEEVRGTIEAVQRLREEQRGMEEELQAMDQRLRAAESRPGQMMAFLAKLADEPGVVLRAMLAKKEELAAAGNNGSDPCKRRRIGADTGRGGVATGGDAAEMAQSRGTVPFPFSVLGQVFY</sequence>
<dbReference type="EMBL" id="AY344493">
    <property type="protein sequence ID" value="AAQ23065.1"/>
    <property type="molecule type" value="mRNA"/>
</dbReference>
<dbReference type="EMBL" id="AP003309">
    <property type="protein sequence ID" value="BAB89933.1"/>
    <property type="molecule type" value="Genomic_DNA"/>
</dbReference>
<dbReference type="EMBL" id="AP003560">
    <property type="protein sequence ID" value="BAB68070.1"/>
    <property type="molecule type" value="Genomic_DNA"/>
</dbReference>
<dbReference type="EMBL" id="AP008207">
    <property type="protein sequence ID" value="BAF06074.1"/>
    <property type="molecule type" value="Genomic_DNA"/>
</dbReference>
<dbReference type="EMBL" id="AP014957">
    <property type="protein sequence ID" value="BAS74204.1"/>
    <property type="molecule type" value="Genomic_DNA"/>
</dbReference>
<dbReference type="EMBL" id="CM000140">
    <property type="protein sequence ID" value="EAZ28980.1"/>
    <property type="status" value="ALT_INIT"/>
    <property type="molecule type" value="Genomic_DNA"/>
</dbReference>
<dbReference type="EMBL" id="AK066316">
    <property type="protein sequence ID" value="BAG89907.1"/>
    <property type="molecule type" value="mRNA"/>
</dbReference>
<dbReference type="RefSeq" id="XP_015633152.1">
    <property type="nucleotide sequence ID" value="XM_015777666.1"/>
</dbReference>
<dbReference type="SMR" id="Q942D6"/>
<dbReference type="FunCoup" id="Q942D6">
    <property type="interactions" value="17"/>
</dbReference>
<dbReference type="STRING" id="39947.Q942D6"/>
<dbReference type="PaxDb" id="39947-Q942D6"/>
<dbReference type="EnsemblPlants" id="Os01t0733200-01">
    <property type="protein sequence ID" value="Os01t0733200-01"/>
    <property type="gene ID" value="Os01g0733200"/>
</dbReference>
<dbReference type="Gramene" id="Os01t0733200-01">
    <property type="protein sequence ID" value="Os01t0733200-01"/>
    <property type="gene ID" value="Os01g0733200"/>
</dbReference>
<dbReference type="KEGG" id="dosa:Os01g0733200"/>
<dbReference type="eggNOG" id="KOG0627">
    <property type="taxonomic scope" value="Eukaryota"/>
</dbReference>
<dbReference type="HOGENOM" id="CLU_030308_6_0_1"/>
<dbReference type="InParanoid" id="Q942D6"/>
<dbReference type="OMA" id="EQKAIGW"/>
<dbReference type="OrthoDB" id="60033at2759"/>
<dbReference type="Proteomes" id="UP000000763">
    <property type="component" value="Chromosome 1"/>
</dbReference>
<dbReference type="Proteomes" id="UP000007752">
    <property type="component" value="Chromosome 3"/>
</dbReference>
<dbReference type="Proteomes" id="UP000059680">
    <property type="component" value="Chromosome 1"/>
</dbReference>
<dbReference type="GO" id="GO:0005634">
    <property type="term" value="C:nucleus"/>
    <property type="evidence" value="ECO:0000314"/>
    <property type="project" value="CACAO"/>
</dbReference>
<dbReference type="GO" id="GO:0003700">
    <property type="term" value="F:DNA-binding transcription factor activity"/>
    <property type="evidence" value="ECO:0000318"/>
    <property type="project" value="GO_Central"/>
</dbReference>
<dbReference type="GO" id="GO:0043565">
    <property type="term" value="F:sequence-specific DNA binding"/>
    <property type="evidence" value="ECO:0007669"/>
    <property type="project" value="InterPro"/>
</dbReference>
<dbReference type="GO" id="GO:0034605">
    <property type="term" value="P:cellular response to heat"/>
    <property type="evidence" value="ECO:0000318"/>
    <property type="project" value="GO_Central"/>
</dbReference>
<dbReference type="GO" id="GO:0006357">
    <property type="term" value="P:regulation of transcription by RNA polymerase II"/>
    <property type="evidence" value="ECO:0000318"/>
    <property type="project" value="GO_Central"/>
</dbReference>
<dbReference type="GO" id="GO:0009737">
    <property type="term" value="P:response to abscisic acid"/>
    <property type="evidence" value="ECO:0000315"/>
    <property type="project" value="CACAO"/>
</dbReference>
<dbReference type="GO" id="GO:0006970">
    <property type="term" value="P:response to osmotic stress"/>
    <property type="evidence" value="ECO:0000315"/>
    <property type="project" value="CACAO"/>
</dbReference>
<dbReference type="FunFam" id="1.10.10.10:FF:000037">
    <property type="entry name" value="Heat stress transcription factor B-4"/>
    <property type="match status" value="1"/>
</dbReference>
<dbReference type="Gene3D" id="1.10.10.10">
    <property type="entry name" value="Winged helix-like DNA-binding domain superfamily/Winged helix DNA-binding domain"/>
    <property type="match status" value="1"/>
</dbReference>
<dbReference type="InterPro" id="IPR000232">
    <property type="entry name" value="HSF_DNA-bd"/>
</dbReference>
<dbReference type="InterPro" id="IPR036388">
    <property type="entry name" value="WH-like_DNA-bd_sf"/>
</dbReference>
<dbReference type="InterPro" id="IPR036390">
    <property type="entry name" value="WH_DNA-bd_sf"/>
</dbReference>
<dbReference type="PANTHER" id="PTHR10015">
    <property type="entry name" value="HEAT SHOCK TRANSCRIPTION FACTOR"/>
    <property type="match status" value="1"/>
</dbReference>
<dbReference type="PANTHER" id="PTHR10015:SF173">
    <property type="entry name" value="HEAT STRESS TRANSCRIPTION FACTOR C-1B"/>
    <property type="match status" value="1"/>
</dbReference>
<dbReference type="Pfam" id="PF00447">
    <property type="entry name" value="HSF_DNA-bind"/>
    <property type="match status" value="1"/>
</dbReference>
<dbReference type="PRINTS" id="PR00056">
    <property type="entry name" value="HSFDOMAIN"/>
</dbReference>
<dbReference type="SMART" id="SM00415">
    <property type="entry name" value="HSF"/>
    <property type="match status" value="1"/>
</dbReference>
<dbReference type="SUPFAM" id="SSF46785">
    <property type="entry name" value="Winged helix' DNA-binding domain"/>
    <property type="match status" value="1"/>
</dbReference>
<dbReference type="PROSITE" id="PS00434">
    <property type="entry name" value="HSF_DOMAIN"/>
    <property type="match status" value="1"/>
</dbReference>
<gene>
    <name type="primary">HSFC1B</name>
    <name type="synonym">HSF03</name>
    <name type="synonym">HSF11</name>
    <name type="ordered locus">Os01g0733200</name>
    <name type="ordered locus">LOC_Os01g53220</name>
    <name type="ORF">B1060H01.5</name>
    <name type="ORF">OsJ_012463</name>
    <name type="ORF">OSJNBb0036G09.16</name>
</gene>
<evidence type="ECO:0000250" key="1"/>
<evidence type="ECO:0000255" key="2"/>
<evidence type="ECO:0000256" key="3">
    <source>
        <dbReference type="SAM" id="MobiDB-lite"/>
    </source>
</evidence>
<evidence type="ECO:0000305" key="4"/>
<feature type="chain" id="PRO_0000350842" description="Heat stress transcription factor C-1b">
    <location>
        <begin position="1"/>
        <end position="250"/>
    </location>
</feature>
<feature type="region of interest" description="Hydrophobic repeat HR-A/B">
    <location>
        <begin position="144"/>
        <end position="180"/>
    </location>
</feature>
<feature type="region of interest" description="Disordered" evidence="3">
    <location>
        <begin position="199"/>
        <end position="226"/>
    </location>
</feature>
<feature type="coiled-coil region" evidence="2">
    <location>
        <begin position="129"/>
        <end position="182"/>
    </location>
</feature>
<feature type="short sequence motif" description="Nuclear localization signal" evidence="2">
    <location>
        <begin position="209"/>
        <end position="212"/>
    </location>
</feature>
<reference key="1">
    <citation type="submission" date="2003-07" db="EMBL/GenBank/DDBJ databases">
        <title>Isolation rice heat shock factor by modified yeast one-hybrid system method.</title>
        <authorList>
            <person name="Yao Q.-H."/>
            <person name="Peng R.-H."/>
            <person name="Xiong A.-S."/>
        </authorList>
    </citation>
    <scope>NUCLEOTIDE SEQUENCE [MRNA]</scope>
</reference>
<reference key="2">
    <citation type="journal article" date="2002" name="Nature">
        <title>The genome sequence and structure of rice chromosome 1.</title>
        <authorList>
            <person name="Sasaki T."/>
            <person name="Matsumoto T."/>
            <person name="Yamamoto K."/>
            <person name="Sakata K."/>
            <person name="Baba T."/>
            <person name="Katayose Y."/>
            <person name="Wu J."/>
            <person name="Niimura Y."/>
            <person name="Cheng Z."/>
            <person name="Nagamura Y."/>
            <person name="Antonio B.A."/>
            <person name="Kanamori H."/>
            <person name="Hosokawa S."/>
            <person name="Masukawa M."/>
            <person name="Arikawa K."/>
            <person name="Chiden Y."/>
            <person name="Hayashi M."/>
            <person name="Okamoto M."/>
            <person name="Ando T."/>
            <person name="Aoki H."/>
            <person name="Arita K."/>
            <person name="Hamada M."/>
            <person name="Harada C."/>
            <person name="Hijishita S."/>
            <person name="Honda M."/>
            <person name="Ichikawa Y."/>
            <person name="Idonuma A."/>
            <person name="Iijima M."/>
            <person name="Ikeda M."/>
            <person name="Ikeno M."/>
            <person name="Ito S."/>
            <person name="Ito T."/>
            <person name="Ito Y."/>
            <person name="Ito Y."/>
            <person name="Iwabuchi A."/>
            <person name="Kamiya K."/>
            <person name="Karasawa W."/>
            <person name="Katagiri S."/>
            <person name="Kikuta A."/>
            <person name="Kobayashi N."/>
            <person name="Kono I."/>
            <person name="Machita K."/>
            <person name="Maehara T."/>
            <person name="Mizuno H."/>
            <person name="Mizubayashi T."/>
            <person name="Mukai Y."/>
            <person name="Nagasaki H."/>
            <person name="Nakashima M."/>
            <person name="Nakama Y."/>
            <person name="Nakamichi Y."/>
            <person name="Nakamura M."/>
            <person name="Namiki N."/>
            <person name="Negishi M."/>
            <person name="Ohta I."/>
            <person name="Ono N."/>
            <person name="Saji S."/>
            <person name="Sakai K."/>
            <person name="Shibata M."/>
            <person name="Shimokawa T."/>
            <person name="Shomura A."/>
            <person name="Song J."/>
            <person name="Takazaki Y."/>
            <person name="Terasawa K."/>
            <person name="Tsuji K."/>
            <person name="Waki K."/>
            <person name="Yamagata H."/>
            <person name="Yamane H."/>
            <person name="Yoshiki S."/>
            <person name="Yoshihara R."/>
            <person name="Yukawa K."/>
            <person name="Zhong H."/>
            <person name="Iwama H."/>
            <person name="Endo T."/>
            <person name="Ito H."/>
            <person name="Hahn J.H."/>
            <person name="Kim H.-I."/>
            <person name="Eun M.-Y."/>
            <person name="Yano M."/>
            <person name="Jiang J."/>
            <person name="Gojobori T."/>
        </authorList>
    </citation>
    <scope>NUCLEOTIDE SEQUENCE [LARGE SCALE GENOMIC DNA]</scope>
    <source>
        <strain>cv. Nipponbare</strain>
    </source>
</reference>
<reference key="3">
    <citation type="journal article" date="2005" name="Nature">
        <title>The map-based sequence of the rice genome.</title>
        <authorList>
            <consortium name="International rice genome sequencing project (IRGSP)"/>
        </authorList>
    </citation>
    <scope>NUCLEOTIDE SEQUENCE [LARGE SCALE GENOMIC DNA]</scope>
    <source>
        <strain>cv. Nipponbare</strain>
    </source>
</reference>
<reference key="4">
    <citation type="journal article" date="2008" name="Nucleic Acids Res.">
        <title>The rice annotation project database (RAP-DB): 2008 update.</title>
        <authorList>
            <consortium name="The rice annotation project (RAP)"/>
        </authorList>
    </citation>
    <scope>GENOME REANNOTATION</scope>
    <source>
        <strain>cv. Nipponbare</strain>
    </source>
</reference>
<reference key="5">
    <citation type="journal article" date="2013" name="Rice">
        <title>Improvement of the Oryza sativa Nipponbare reference genome using next generation sequence and optical map data.</title>
        <authorList>
            <person name="Kawahara Y."/>
            <person name="de la Bastide M."/>
            <person name="Hamilton J.P."/>
            <person name="Kanamori H."/>
            <person name="McCombie W.R."/>
            <person name="Ouyang S."/>
            <person name="Schwartz D.C."/>
            <person name="Tanaka T."/>
            <person name="Wu J."/>
            <person name="Zhou S."/>
            <person name="Childs K.L."/>
            <person name="Davidson R.M."/>
            <person name="Lin H."/>
            <person name="Quesada-Ocampo L."/>
            <person name="Vaillancourt B."/>
            <person name="Sakai H."/>
            <person name="Lee S.S."/>
            <person name="Kim J."/>
            <person name="Numa H."/>
            <person name="Itoh T."/>
            <person name="Buell C.R."/>
            <person name="Matsumoto T."/>
        </authorList>
    </citation>
    <scope>GENOME REANNOTATION</scope>
    <source>
        <strain>cv. Nipponbare</strain>
    </source>
</reference>
<reference key="6">
    <citation type="journal article" date="2005" name="PLoS Biol.">
        <title>The genomes of Oryza sativa: a history of duplications.</title>
        <authorList>
            <person name="Yu J."/>
            <person name="Wang J."/>
            <person name="Lin W."/>
            <person name="Li S."/>
            <person name="Li H."/>
            <person name="Zhou J."/>
            <person name="Ni P."/>
            <person name="Dong W."/>
            <person name="Hu S."/>
            <person name="Zeng C."/>
            <person name="Zhang J."/>
            <person name="Zhang Y."/>
            <person name="Li R."/>
            <person name="Xu Z."/>
            <person name="Li S."/>
            <person name="Li X."/>
            <person name="Zheng H."/>
            <person name="Cong L."/>
            <person name="Lin L."/>
            <person name="Yin J."/>
            <person name="Geng J."/>
            <person name="Li G."/>
            <person name="Shi J."/>
            <person name="Liu J."/>
            <person name="Lv H."/>
            <person name="Li J."/>
            <person name="Wang J."/>
            <person name="Deng Y."/>
            <person name="Ran L."/>
            <person name="Shi X."/>
            <person name="Wang X."/>
            <person name="Wu Q."/>
            <person name="Li C."/>
            <person name="Ren X."/>
            <person name="Wang J."/>
            <person name="Wang X."/>
            <person name="Li D."/>
            <person name="Liu D."/>
            <person name="Zhang X."/>
            <person name="Ji Z."/>
            <person name="Zhao W."/>
            <person name="Sun Y."/>
            <person name="Zhang Z."/>
            <person name="Bao J."/>
            <person name="Han Y."/>
            <person name="Dong L."/>
            <person name="Ji J."/>
            <person name="Chen P."/>
            <person name="Wu S."/>
            <person name="Liu J."/>
            <person name="Xiao Y."/>
            <person name="Bu D."/>
            <person name="Tan J."/>
            <person name="Yang L."/>
            <person name="Ye C."/>
            <person name="Zhang J."/>
            <person name="Xu J."/>
            <person name="Zhou Y."/>
            <person name="Yu Y."/>
            <person name="Zhang B."/>
            <person name="Zhuang S."/>
            <person name="Wei H."/>
            <person name="Liu B."/>
            <person name="Lei M."/>
            <person name="Yu H."/>
            <person name="Li Y."/>
            <person name="Xu H."/>
            <person name="Wei S."/>
            <person name="He X."/>
            <person name="Fang L."/>
            <person name="Zhang Z."/>
            <person name="Zhang Y."/>
            <person name="Huang X."/>
            <person name="Su Z."/>
            <person name="Tong W."/>
            <person name="Li J."/>
            <person name="Tong Z."/>
            <person name="Li S."/>
            <person name="Ye J."/>
            <person name="Wang L."/>
            <person name="Fang L."/>
            <person name="Lei T."/>
            <person name="Chen C.-S."/>
            <person name="Chen H.-C."/>
            <person name="Xu Z."/>
            <person name="Li H."/>
            <person name="Huang H."/>
            <person name="Zhang F."/>
            <person name="Xu H."/>
            <person name="Li N."/>
            <person name="Zhao C."/>
            <person name="Li S."/>
            <person name="Dong L."/>
            <person name="Huang Y."/>
            <person name="Li L."/>
            <person name="Xi Y."/>
            <person name="Qi Q."/>
            <person name="Li W."/>
            <person name="Zhang B."/>
            <person name="Hu W."/>
            <person name="Zhang Y."/>
            <person name="Tian X."/>
            <person name="Jiao Y."/>
            <person name="Liang X."/>
            <person name="Jin J."/>
            <person name="Gao L."/>
            <person name="Zheng W."/>
            <person name="Hao B."/>
            <person name="Liu S.-M."/>
            <person name="Wang W."/>
            <person name="Yuan L."/>
            <person name="Cao M."/>
            <person name="McDermott J."/>
            <person name="Samudrala R."/>
            <person name="Wang J."/>
            <person name="Wong G.K.-S."/>
            <person name="Yang H."/>
        </authorList>
    </citation>
    <scope>NUCLEOTIDE SEQUENCE [LARGE SCALE GENOMIC DNA]</scope>
    <source>
        <strain>cv. Nipponbare</strain>
    </source>
</reference>
<reference key="7">
    <citation type="journal article" date="2003" name="Science">
        <title>Collection, mapping, and annotation of over 28,000 cDNA clones from japonica rice.</title>
        <authorList>
            <consortium name="The rice full-length cDNA consortium"/>
        </authorList>
    </citation>
    <scope>NUCLEOTIDE SEQUENCE [LARGE SCALE MRNA]</scope>
    <source>
        <strain>cv. Nipponbare</strain>
    </source>
</reference>
<reference key="8">
    <citation type="journal article" date="2004" name="J. Biosci.">
        <title>Heat stress response in plants: a complex game with chaperones and more than twenty heat stress transcription factors.</title>
        <authorList>
            <person name="Baniwal S.K."/>
            <person name="Bharti K."/>
            <person name="Chan K.Y."/>
            <person name="Fauth M."/>
            <person name="Ganguli A."/>
            <person name="Kotak S."/>
            <person name="Mishra S.K."/>
            <person name="Nover L."/>
            <person name="Port M."/>
            <person name="Scharf K.-D."/>
            <person name="Tripp J."/>
            <person name="Weber C."/>
            <person name="Zielinski D."/>
            <person name="von Koskull-Doering P."/>
        </authorList>
    </citation>
    <scope>GENE FAMILY</scope>
    <scope>NOMENCLATURE</scope>
</reference>
<reference key="9">
    <citation type="journal article" date="2008" name="J. Genet. Genomics">
        <title>Genome-wide analysis of heat shock transcription factor families in rice and Arabidopsis.</title>
        <authorList>
            <person name="Guo J."/>
            <person name="Wu J."/>
            <person name="Ji Q."/>
            <person name="Wang C."/>
            <person name="Luo L."/>
            <person name="Yuan Y."/>
            <person name="Wang Y."/>
            <person name="Wang J."/>
        </authorList>
    </citation>
    <scope>GENE FAMILY</scope>
    <scope>NOMENCLATURE</scope>
</reference>